<keyword id="KW-0028">Amino-acid biosynthesis</keyword>
<keyword id="KW-0057">Aromatic amino acid biosynthesis</keyword>
<keyword id="KW-0210">Decarboxylase</keyword>
<keyword id="KW-0456">Lyase</keyword>
<keyword id="KW-1185">Reference proteome</keyword>
<keyword id="KW-0822">Tryptophan biosynthesis</keyword>
<evidence type="ECO:0000255" key="1">
    <source>
        <dbReference type="HAMAP-Rule" id="MF_00134"/>
    </source>
</evidence>
<sequence>MSDILKQICDVKVQEVAAAQKRMPFADMRRDAESRVLTRDFVGALRAKIAAGQAGVIAEIKKASPSKGVIREDFIPADIAQSYADGDGKGVSAACLSVLTDKQFFQGSVDYLKQARASCHLPVLRKDFMVDPYQIYESRAMGADCVLLIAACLDDAQMAEMEQIAHSLDMAVLVEVHDGAELDRALRLKTPLVGINNRNLRSFEVSIQTTLDLQKNVPADRLLVTESGIGSREDVKAMRDAGIHSFLVGEAFMRAKEPGEALAKLFA</sequence>
<proteinExistence type="inferred from homology"/>
<feature type="chain" id="PRO_1000095864" description="Indole-3-glycerol phosphate synthase">
    <location>
        <begin position="1"/>
        <end position="267"/>
    </location>
</feature>
<reference key="1">
    <citation type="submission" date="2007-11" db="EMBL/GenBank/DDBJ databases">
        <title>Complete sequence of Delftia acidovorans DSM 14801 / SPH-1.</title>
        <authorList>
            <person name="Copeland A."/>
            <person name="Lucas S."/>
            <person name="Lapidus A."/>
            <person name="Barry K."/>
            <person name="Glavina del Rio T."/>
            <person name="Dalin E."/>
            <person name="Tice H."/>
            <person name="Pitluck S."/>
            <person name="Lowry S."/>
            <person name="Clum A."/>
            <person name="Schmutz J."/>
            <person name="Larimer F."/>
            <person name="Land M."/>
            <person name="Hauser L."/>
            <person name="Kyrpides N."/>
            <person name="Kim E."/>
            <person name="Schleheck D."/>
            <person name="Richardson P."/>
        </authorList>
    </citation>
    <scope>NUCLEOTIDE SEQUENCE [LARGE SCALE GENOMIC DNA]</scope>
    <source>
        <strain>DSM 14801 / SPH-1</strain>
    </source>
</reference>
<protein>
    <recommendedName>
        <fullName evidence="1">Indole-3-glycerol phosphate synthase</fullName>
        <shortName evidence="1">IGPS</shortName>
        <ecNumber evidence="1">4.1.1.48</ecNumber>
    </recommendedName>
</protein>
<organism>
    <name type="scientific">Delftia acidovorans (strain DSM 14801 / SPH-1)</name>
    <dbReference type="NCBI Taxonomy" id="398578"/>
    <lineage>
        <taxon>Bacteria</taxon>
        <taxon>Pseudomonadati</taxon>
        <taxon>Pseudomonadota</taxon>
        <taxon>Betaproteobacteria</taxon>
        <taxon>Burkholderiales</taxon>
        <taxon>Comamonadaceae</taxon>
        <taxon>Delftia</taxon>
    </lineage>
</organism>
<comment type="catalytic activity">
    <reaction evidence="1">
        <text>1-(2-carboxyphenylamino)-1-deoxy-D-ribulose 5-phosphate + H(+) = (1S,2R)-1-C-(indol-3-yl)glycerol 3-phosphate + CO2 + H2O</text>
        <dbReference type="Rhea" id="RHEA:23476"/>
        <dbReference type="ChEBI" id="CHEBI:15377"/>
        <dbReference type="ChEBI" id="CHEBI:15378"/>
        <dbReference type="ChEBI" id="CHEBI:16526"/>
        <dbReference type="ChEBI" id="CHEBI:58613"/>
        <dbReference type="ChEBI" id="CHEBI:58866"/>
        <dbReference type="EC" id="4.1.1.48"/>
    </reaction>
</comment>
<comment type="pathway">
    <text evidence="1">Amino-acid biosynthesis; L-tryptophan biosynthesis; L-tryptophan from chorismate: step 4/5.</text>
</comment>
<comment type="similarity">
    <text evidence="1">Belongs to the TrpC family.</text>
</comment>
<name>TRPC_DELAS</name>
<gene>
    <name evidence="1" type="primary">trpC</name>
    <name type="ordered locus">Daci_0770</name>
</gene>
<dbReference type="EC" id="4.1.1.48" evidence="1"/>
<dbReference type="EMBL" id="CP000884">
    <property type="protein sequence ID" value="ABX33416.1"/>
    <property type="molecule type" value="Genomic_DNA"/>
</dbReference>
<dbReference type="RefSeq" id="WP_012202702.1">
    <property type="nucleotide sequence ID" value="NC_010002.1"/>
</dbReference>
<dbReference type="SMR" id="A9BS06"/>
<dbReference type="STRING" id="398578.Daci_0770"/>
<dbReference type="GeneID" id="24116986"/>
<dbReference type="KEGG" id="dac:Daci_0770"/>
<dbReference type="eggNOG" id="COG0134">
    <property type="taxonomic scope" value="Bacteria"/>
</dbReference>
<dbReference type="HOGENOM" id="CLU_034247_2_0_4"/>
<dbReference type="UniPathway" id="UPA00035">
    <property type="reaction ID" value="UER00043"/>
</dbReference>
<dbReference type="Proteomes" id="UP000000784">
    <property type="component" value="Chromosome"/>
</dbReference>
<dbReference type="GO" id="GO:0004425">
    <property type="term" value="F:indole-3-glycerol-phosphate synthase activity"/>
    <property type="evidence" value="ECO:0007669"/>
    <property type="project" value="UniProtKB-UniRule"/>
</dbReference>
<dbReference type="GO" id="GO:0004640">
    <property type="term" value="F:phosphoribosylanthranilate isomerase activity"/>
    <property type="evidence" value="ECO:0007669"/>
    <property type="project" value="TreeGrafter"/>
</dbReference>
<dbReference type="GO" id="GO:0000162">
    <property type="term" value="P:L-tryptophan biosynthetic process"/>
    <property type="evidence" value="ECO:0007669"/>
    <property type="project" value="UniProtKB-UniRule"/>
</dbReference>
<dbReference type="CDD" id="cd00331">
    <property type="entry name" value="IGPS"/>
    <property type="match status" value="1"/>
</dbReference>
<dbReference type="FunFam" id="3.20.20.70:FF:000024">
    <property type="entry name" value="Indole-3-glycerol phosphate synthase"/>
    <property type="match status" value="1"/>
</dbReference>
<dbReference type="Gene3D" id="3.20.20.70">
    <property type="entry name" value="Aldolase class I"/>
    <property type="match status" value="1"/>
</dbReference>
<dbReference type="HAMAP" id="MF_00134_B">
    <property type="entry name" value="IGPS_B"/>
    <property type="match status" value="1"/>
</dbReference>
<dbReference type="InterPro" id="IPR013785">
    <property type="entry name" value="Aldolase_TIM"/>
</dbReference>
<dbReference type="InterPro" id="IPR045186">
    <property type="entry name" value="Indole-3-glycerol_P_synth"/>
</dbReference>
<dbReference type="InterPro" id="IPR013798">
    <property type="entry name" value="Indole-3-glycerol_P_synth_dom"/>
</dbReference>
<dbReference type="InterPro" id="IPR001468">
    <property type="entry name" value="Indole-3-GlycerolPSynthase_CS"/>
</dbReference>
<dbReference type="InterPro" id="IPR011060">
    <property type="entry name" value="RibuloseP-bd_barrel"/>
</dbReference>
<dbReference type="NCBIfam" id="NF001370">
    <property type="entry name" value="PRK00278.1-2"/>
    <property type="match status" value="1"/>
</dbReference>
<dbReference type="NCBIfam" id="NF001373">
    <property type="entry name" value="PRK00278.1-6"/>
    <property type="match status" value="1"/>
</dbReference>
<dbReference type="NCBIfam" id="NF001377">
    <property type="entry name" value="PRK00278.2-4"/>
    <property type="match status" value="1"/>
</dbReference>
<dbReference type="PANTHER" id="PTHR22854:SF2">
    <property type="entry name" value="INDOLE-3-GLYCEROL-PHOSPHATE SYNTHASE"/>
    <property type="match status" value="1"/>
</dbReference>
<dbReference type="PANTHER" id="PTHR22854">
    <property type="entry name" value="TRYPTOPHAN BIOSYNTHESIS PROTEIN"/>
    <property type="match status" value="1"/>
</dbReference>
<dbReference type="Pfam" id="PF00218">
    <property type="entry name" value="IGPS"/>
    <property type="match status" value="1"/>
</dbReference>
<dbReference type="SUPFAM" id="SSF51366">
    <property type="entry name" value="Ribulose-phoshate binding barrel"/>
    <property type="match status" value="1"/>
</dbReference>
<dbReference type="PROSITE" id="PS00614">
    <property type="entry name" value="IGPS"/>
    <property type="match status" value="1"/>
</dbReference>
<accession>A9BS06</accession>